<feature type="signal peptide" evidence="2">
    <location>
        <begin position="1"/>
        <end position="34"/>
    </location>
</feature>
<feature type="propeptide" id="PRO_0000021724" evidence="5 6">
    <location>
        <begin position="35"/>
        <end position="103"/>
    </location>
</feature>
<feature type="chain" id="PRO_0000021725" description="Major microneme antigen">
    <location>
        <begin position="104"/>
        <end position="241"/>
    </location>
</feature>
<feature type="domain" description="PAN 1" evidence="3">
    <location>
        <begin position="112"/>
        <end position="181"/>
    </location>
</feature>
<feature type="domain" description="PAN 2" evidence="3">
    <location>
        <begin position="185"/>
        <end position="241"/>
    </location>
</feature>
<feature type="region of interest" description="Disordered" evidence="4">
    <location>
        <begin position="64"/>
        <end position="90"/>
    </location>
</feature>
<feature type="compositionally biased region" description="Basic and acidic residues" evidence="4">
    <location>
        <begin position="64"/>
        <end position="83"/>
    </location>
</feature>
<feature type="binding site" evidence="1">
    <location>
        <position position="121"/>
    </location>
    <ligand>
        <name>a carbohydrate</name>
        <dbReference type="ChEBI" id="CHEBI:16646"/>
    </ligand>
</feature>
<feature type="binding site" evidence="1">
    <location>
        <position position="162"/>
    </location>
    <ligand>
        <name>a carbohydrate</name>
        <dbReference type="ChEBI" id="CHEBI:16646"/>
    </ligand>
</feature>
<feature type="binding site" evidence="1">
    <location>
        <position position="169"/>
    </location>
    <ligand>
        <name>a carbohydrate</name>
        <dbReference type="ChEBI" id="CHEBI:16646"/>
    </ligand>
</feature>
<feature type="binding site" evidence="1">
    <location>
        <position position="174"/>
    </location>
    <ligand>
        <name>a carbohydrate</name>
        <dbReference type="ChEBI" id="CHEBI:16646"/>
    </ligand>
</feature>
<feature type="disulfide bond" evidence="3">
    <location>
        <begin position="112"/>
        <end position="181"/>
    </location>
</feature>
<feature type="disulfide bond" evidence="3">
    <location>
        <begin position="137"/>
        <end position="159"/>
    </location>
</feature>
<feature type="disulfide bond" evidence="3">
    <location>
        <begin position="141"/>
        <end position="147"/>
    </location>
</feature>
<feature type="disulfide bond" evidence="3">
    <location>
        <begin position="185"/>
        <end position="189"/>
    </location>
</feature>
<feature type="disulfide bond" evidence="3">
    <location>
        <begin position="210"/>
        <end position="230"/>
    </location>
</feature>
<feature type="disulfide bond" evidence="3">
    <location>
        <begin position="214"/>
        <end position="220"/>
    </location>
</feature>
<reference key="1">
    <citation type="journal article" date="1993" name="Mol. Biochem. Parasitol.">
        <title>Characterization of cDNA clones encoding a major microneme antigen of Sarcocystis muris (Apicomplexa) cyst merozoites.</title>
        <authorList>
            <person name="Eschenbacher K.-H."/>
            <person name="Klein H."/>
            <person name="Sommer I."/>
            <person name="Meyer H.E."/>
            <person name="Entzeroth R."/>
            <person name="Mehlhorn H."/>
            <person name="Rueger W."/>
        </authorList>
    </citation>
    <scope>NUCLEOTIDE SEQUENCE [MRNA]</scope>
    <scope>PROTEIN SEQUENCE OF 104-126</scope>
</reference>
<reference key="2">
    <citation type="journal article" date="1996" name="Parasitol. Res.">
        <title>Characterization of genomic clones encoding two microneme antigens of Sarcocystis muris (Apicomplexa).</title>
        <authorList>
            <person name="Klein H."/>
            <person name="Mehlhorn H."/>
            <person name="Rueger W."/>
        </authorList>
    </citation>
    <scope>NUCLEOTIDE SEQUENCE [MRNA]</scope>
    <scope>PROTEIN SEQUENCE OF 104-126</scope>
</reference>
<reference key="3">
    <citation type="submission" date="1993-07" db="EMBL/GenBank/DDBJ databases">
        <title>Cloning and expression in E.coli of cDNAs encoding a 16/17 kDa major microneme protein of Sarcocystis muris?</title>
        <authorList>
            <person name="Klein H."/>
            <person name="Eschenbacher K.-H."/>
            <person name="Sommer I."/>
            <person name="Entzeroth R."/>
            <person name="Mehlhorn H."/>
            <person name="Rueger W."/>
        </authorList>
    </citation>
    <scope>NUCLEOTIDE SEQUENCE [MRNA] OF 78-241</scope>
</reference>
<reference key="4">
    <citation type="journal article" date="1998" name="Glycoconj. J.">
        <title>Expression, purification, and biochemical characterization of a recombinant lectin of Sarcocystis muris (Apicomplexa) cyst merozoites.</title>
        <authorList>
            <person name="Klein H."/>
            <person name="Loeschner B."/>
            <person name="Zyto N."/>
            <person name="Poertner M."/>
            <person name="Montag T."/>
        </authorList>
    </citation>
    <scope>FUNCTION</scope>
    <scope>SUBUNIT</scope>
</reference>
<sequence>MTLPIHFPRCVLYGMASAVWSILFLHILVGDTMSAADALSWSGGLIHSPAHRVNVMRSHHHEMGKELEQQHGGEEQQMQRDTKPAAFSNPPHLATGRGPSFVHADGQLDVSCFPHDKNIGSRTTEVAVVQVSSVQDCMKQCQSRPTCSHFTYNKNSKKCHLKDGAPVFYTYTGDMTGPRSCEHTCTDNCWMHSGNPLGTFQYSGHAPAFCWAACKGTAGCVMYTFQGGVCKLYSKNSVERA</sequence>
<accession>Q08668</accession>
<keyword id="KW-0968">Cytoplasmic vesicle</keyword>
<keyword id="KW-0903">Direct protein sequencing</keyword>
<keyword id="KW-1015">Disulfide bond</keyword>
<keyword id="KW-0430">Lectin</keyword>
<keyword id="KW-0677">Repeat</keyword>
<keyword id="KW-0732">Signal</keyword>
<organism>
    <name type="scientific">Sarcocystis muris</name>
    <dbReference type="NCBI Taxonomy" id="5813"/>
    <lineage>
        <taxon>Eukaryota</taxon>
        <taxon>Sar</taxon>
        <taxon>Alveolata</taxon>
        <taxon>Apicomplexa</taxon>
        <taxon>Conoidasida</taxon>
        <taxon>Coccidia</taxon>
        <taxon>Eucoccidiorida</taxon>
        <taxon>Eimeriorina</taxon>
        <taxon>Sarcocystidae</taxon>
        <taxon>Sarcocystis</taxon>
    </lineage>
</organism>
<proteinExistence type="evidence at protein level"/>
<protein>
    <recommendedName>
        <fullName>Major microneme antigen</fullName>
    </recommendedName>
    <alternativeName>
        <fullName>Lectin SML1</fullName>
    </alternativeName>
</protein>
<dbReference type="EMBL" id="L13471">
    <property type="protein sequence ID" value="AAB42048.1"/>
    <property type="molecule type" value="mRNA"/>
</dbReference>
<dbReference type="EMBL" id="L08892">
    <property type="protein sequence ID" value="AAB42049.1"/>
    <property type="status" value="ALT_INIT"/>
    <property type="molecule type" value="mRNA"/>
</dbReference>
<dbReference type="SMR" id="Q08668"/>
<dbReference type="GO" id="GO:0031410">
    <property type="term" value="C:cytoplasmic vesicle"/>
    <property type="evidence" value="ECO:0007669"/>
    <property type="project" value="UniProtKB-KW"/>
</dbReference>
<dbReference type="GO" id="GO:0005576">
    <property type="term" value="C:extracellular region"/>
    <property type="evidence" value="ECO:0007669"/>
    <property type="project" value="InterPro"/>
</dbReference>
<dbReference type="GO" id="GO:0020009">
    <property type="term" value="C:microneme"/>
    <property type="evidence" value="ECO:0007669"/>
    <property type="project" value="UniProtKB-SubCell"/>
</dbReference>
<dbReference type="GO" id="GO:0030246">
    <property type="term" value="F:carbohydrate binding"/>
    <property type="evidence" value="ECO:0007669"/>
    <property type="project" value="UniProtKB-KW"/>
</dbReference>
<dbReference type="GO" id="GO:0006508">
    <property type="term" value="P:proteolysis"/>
    <property type="evidence" value="ECO:0007669"/>
    <property type="project" value="InterPro"/>
</dbReference>
<dbReference type="CDD" id="cd01100">
    <property type="entry name" value="APPLE_Factor_XI_like"/>
    <property type="match status" value="1"/>
</dbReference>
<dbReference type="Gene3D" id="3.30.30.180">
    <property type="match status" value="1"/>
</dbReference>
<dbReference type="Gene3D" id="3.50.4.10">
    <property type="entry name" value="Hepatocyte Growth Factor"/>
    <property type="match status" value="1"/>
</dbReference>
<dbReference type="InterPro" id="IPR000177">
    <property type="entry name" value="Apple"/>
</dbReference>
<dbReference type="InterPro" id="IPR003609">
    <property type="entry name" value="Pan_app"/>
</dbReference>
<dbReference type="Pfam" id="PF00024">
    <property type="entry name" value="PAN_1"/>
    <property type="match status" value="1"/>
</dbReference>
<dbReference type="Pfam" id="PF14295">
    <property type="entry name" value="PAN_4"/>
    <property type="match status" value="1"/>
</dbReference>
<dbReference type="SMART" id="SM00223">
    <property type="entry name" value="APPLE"/>
    <property type="match status" value="1"/>
</dbReference>
<dbReference type="SMART" id="SM00473">
    <property type="entry name" value="PAN_AP"/>
    <property type="match status" value="1"/>
</dbReference>
<dbReference type="SUPFAM" id="SSF57414">
    <property type="entry name" value="Hairpin loop containing domain-like"/>
    <property type="match status" value="1"/>
</dbReference>
<dbReference type="PROSITE" id="PS50948">
    <property type="entry name" value="PAN"/>
    <property type="match status" value="2"/>
</dbReference>
<name>MIAM_SARMU</name>
<evidence type="ECO:0000250" key="1"/>
<evidence type="ECO:0000255" key="2"/>
<evidence type="ECO:0000255" key="3">
    <source>
        <dbReference type="PROSITE-ProRule" id="PRU00315"/>
    </source>
</evidence>
<evidence type="ECO:0000256" key="4">
    <source>
        <dbReference type="SAM" id="MobiDB-lite"/>
    </source>
</evidence>
<evidence type="ECO:0000269" key="5">
    <source>
    </source>
</evidence>
<evidence type="ECO:0000269" key="6">
    <source>
    </source>
</evidence>
<evidence type="ECO:0000269" key="7">
    <source>
    </source>
</evidence>
<evidence type="ECO:0000305" key="8"/>
<comment type="function">
    <text evidence="7">Galactose-binding lectin. Plays a role in adhesion to the host cell. Has a potential role in invasion of host cells.</text>
</comment>
<comment type="subunit">
    <text evidence="7">Homodimer or heterodimer of major microneme antigen and microneme antigen.</text>
</comment>
<comment type="subcellular location">
    <subcellularLocation>
        <location>Cytoplasmic vesicle</location>
        <location>Secretory vesicle</location>
        <location>Microneme</location>
    </subcellularLocation>
</comment>
<comment type="developmental stage">
    <text>Cyst merozoites.</text>
</comment>
<comment type="PTM">
    <text evidence="1">Contains six disulfide bonds.</text>
</comment>
<comment type="similarity">
    <text evidence="8">Belongs to the microneme antigen family.</text>
</comment>
<comment type="sequence caution" evidence="8">
    <conflict type="erroneous initiation">
        <sequence resource="EMBL-CDS" id="AAB42049"/>
    </conflict>
</comment>